<keyword id="KW-0665">Pyrimidine biosynthesis</keyword>
<keyword id="KW-0808">Transferase</keyword>
<name>PYRB_ECOL5</name>
<organism>
    <name type="scientific">Escherichia coli O6:K15:H31 (strain 536 / UPEC)</name>
    <dbReference type="NCBI Taxonomy" id="362663"/>
    <lineage>
        <taxon>Bacteria</taxon>
        <taxon>Pseudomonadati</taxon>
        <taxon>Pseudomonadota</taxon>
        <taxon>Gammaproteobacteria</taxon>
        <taxon>Enterobacterales</taxon>
        <taxon>Enterobacteriaceae</taxon>
        <taxon>Escherichia</taxon>
    </lineage>
</organism>
<protein>
    <recommendedName>
        <fullName evidence="1">Aspartate carbamoyltransferase catalytic subunit</fullName>
        <ecNumber evidence="1">2.1.3.2</ecNumber>
    </recommendedName>
    <alternativeName>
        <fullName evidence="1">Aspartate transcarbamylase</fullName>
        <shortName evidence="1">ATCase</shortName>
    </alternativeName>
</protein>
<proteinExistence type="inferred from homology"/>
<dbReference type="EC" id="2.1.3.2" evidence="1"/>
<dbReference type="EMBL" id="CP000247">
    <property type="protein sequence ID" value="ABG72436.1"/>
    <property type="molecule type" value="Genomic_DNA"/>
</dbReference>
<dbReference type="RefSeq" id="WP_000013046.1">
    <property type="nucleotide sequence ID" value="NC_008253.1"/>
</dbReference>
<dbReference type="SMR" id="Q0T9E3"/>
<dbReference type="GeneID" id="93777579"/>
<dbReference type="KEGG" id="ecp:ECP_4495"/>
<dbReference type="HOGENOM" id="CLU_043846_1_2_6"/>
<dbReference type="UniPathway" id="UPA00070">
    <property type="reaction ID" value="UER00116"/>
</dbReference>
<dbReference type="Proteomes" id="UP000009182">
    <property type="component" value="Chromosome"/>
</dbReference>
<dbReference type="GO" id="GO:0005829">
    <property type="term" value="C:cytosol"/>
    <property type="evidence" value="ECO:0007669"/>
    <property type="project" value="TreeGrafter"/>
</dbReference>
<dbReference type="GO" id="GO:0016597">
    <property type="term" value="F:amino acid binding"/>
    <property type="evidence" value="ECO:0007669"/>
    <property type="project" value="InterPro"/>
</dbReference>
<dbReference type="GO" id="GO:0004070">
    <property type="term" value="F:aspartate carbamoyltransferase activity"/>
    <property type="evidence" value="ECO:0007669"/>
    <property type="project" value="UniProtKB-UniRule"/>
</dbReference>
<dbReference type="GO" id="GO:0006207">
    <property type="term" value="P:'de novo' pyrimidine nucleobase biosynthetic process"/>
    <property type="evidence" value="ECO:0007669"/>
    <property type="project" value="InterPro"/>
</dbReference>
<dbReference type="GO" id="GO:0044205">
    <property type="term" value="P:'de novo' UMP biosynthetic process"/>
    <property type="evidence" value="ECO:0007669"/>
    <property type="project" value="UniProtKB-UniRule"/>
</dbReference>
<dbReference type="GO" id="GO:0006520">
    <property type="term" value="P:amino acid metabolic process"/>
    <property type="evidence" value="ECO:0007669"/>
    <property type="project" value="InterPro"/>
</dbReference>
<dbReference type="FunFam" id="3.40.50.1370:FF:000001">
    <property type="entry name" value="Aspartate carbamoyltransferase"/>
    <property type="match status" value="1"/>
</dbReference>
<dbReference type="FunFam" id="3.40.50.1370:FF:000002">
    <property type="entry name" value="Aspartate carbamoyltransferase 2"/>
    <property type="match status" value="1"/>
</dbReference>
<dbReference type="Gene3D" id="3.40.50.1370">
    <property type="entry name" value="Aspartate/ornithine carbamoyltransferase"/>
    <property type="match status" value="2"/>
</dbReference>
<dbReference type="HAMAP" id="MF_00001">
    <property type="entry name" value="Asp_carb_tr"/>
    <property type="match status" value="1"/>
</dbReference>
<dbReference type="InterPro" id="IPR006132">
    <property type="entry name" value="Asp/Orn_carbamoyltranf_P-bd"/>
</dbReference>
<dbReference type="InterPro" id="IPR006130">
    <property type="entry name" value="Asp/Orn_carbamoylTrfase"/>
</dbReference>
<dbReference type="InterPro" id="IPR036901">
    <property type="entry name" value="Asp/Orn_carbamoylTrfase_sf"/>
</dbReference>
<dbReference type="InterPro" id="IPR002082">
    <property type="entry name" value="Asp_carbamoyltransf"/>
</dbReference>
<dbReference type="InterPro" id="IPR006131">
    <property type="entry name" value="Asp_carbamoyltransf_Asp/Orn-bd"/>
</dbReference>
<dbReference type="NCBIfam" id="TIGR00670">
    <property type="entry name" value="asp_carb_tr"/>
    <property type="match status" value="1"/>
</dbReference>
<dbReference type="NCBIfam" id="NF002032">
    <property type="entry name" value="PRK00856.1"/>
    <property type="match status" value="1"/>
</dbReference>
<dbReference type="PANTHER" id="PTHR45753:SF6">
    <property type="entry name" value="ASPARTATE CARBAMOYLTRANSFERASE"/>
    <property type="match status" value="1"/>
</dbReference>
<dbReference type="PANTHER" id="PTHR45753">
    <property type="entry name" value="ORNITHINE CARBAMOYLTRANSFERASE, MITOCHONDRIAL"/>
    <property type="match status" value="1"/>
</dbReference>
<dbReference type="Pfam" id="PF00185">
    <property type="entry name" value="OTCace"/>
    <property type="match status" value="1"/>
</dbReference>
<dbReference type="Pfam" id="PF02729">
    <property type="entry name" value="OTCace_N"/>
    <property type="match status" value="1"/>
</dbReference>
<dbReference type="PRINTS" id="PR00100">
    <property type="entry name" value="AOTCASE"/>
</dbReference>
<dbReference type="PRINTS" id="PR00101">
    <property type="entry name" value="ATCASE"/>
</dbReference>
<dbReference type="SUPFAM" id="SSF53671">
    <property type="entry name" value="Aspartate/ornithine carbamoyltransferase"/>
    <property type="match status" value="1"/>
</dbReference>
<dbReference type="PROSITE" id="PS00097">
    <property type="entry name" value="CARBAMOYLTRANSFERASE"/>
    <property type="match status" value="1"/>
</dbReference>
<reference key="1">
    <citation type="journal article" date="2006" name="Mol. Microbiol.">
        <title>Role of pathogenicity island-associated integrases in the genome plasticity of uropathogenic Escherichia coli strain 536.</title>
        <authorList>
            <person name="Hochhut B."/>
            <person name="Wilde C."/>
            <person name="Balling G."/>
            <person name="Middendorf B."/>
            <person name="Dobrindt U."/>
            <person name="Brzuszkiewicz E."/>
            <person name="Gottschalk G."/>
            <person name="Carniel E."/>
            <person name="Hacker J."/>
        </authorList>
    </citation>
    <scope>NUCLEOTIDE SEQUENCE [LARGE SCALE GENOMIC DNA]</scope>
    <source>
        <strain>536 / UPEC</strain>
    </source>
</reference>
<comment type="function">
    <text evidence="1">Catalyzes the condensation of carbamoyl phosphate and aspartate to form carbamoyl aspartate and inorganic phosphate, the committed step in the de novo pyrimidine nucleotide biosynthesis pathway.</text>
</comment>
<comment type="catalytic activity">
    <reaction evidence="1">
        <text>carbamoyl phosphate + L-aspartate = N-carbamoyl-L-aspartate + phosphate + H(+)</text>
        <dbReference type="Rhea" id="RHEA:20013"/>
        <dbReference type="ChEBI" id="CHEBI:15378"/>
        <dbReference type="ChEBI" id="CHEBI:29991"/>
        <dbReference type="ChEBI" id="CHEBI:32814"/>
        <dbReference type="ChEBI" id="CHEBI:43474"/>
        <dbReference type="ChEBI" id="CHEBI:58228"/>
        <dbReference type="EC" id="2.1.3.2"/>
    </reaction>
</comment>
<comment type="pathway">
    <text evidence="1">Pyrimidine metabolism; UMP biosynthesis via de novo pathway; (S)-dihydroorotate from bicarbonate: step 2/3.</text>
</comment>
<comment type="subunit">
    <text evidence="1">Heterododecamer (2C3:3R2) of six catalytic PyrB chains organized as two trimers (C3), and six regulatory PyrI chains organized as three dimers (R2).</text>
</comment>
<comment type="similarity">
    <text evidence="1">Belongs to the aspartate/ornithine carbamoyltransferase superfamily. ATCase family.</text>
</comment>
<sequence>MANPLYQKHIISINDLSRDDLNLVLATAAKLKANPQPELLKHKVIASCFFEASTRTRLSFETSMHRLGASVVGFSDSANTSLGKKGETLADTISVISTYVDAIVMRHPQEGAARLATEFSGNVPVLNAGDGSNQHPTQTLLDLFTIQETQGRLDNLHVAMVGDLKYGRTVHSLTQALAKFDGNRFYFIAPDALAMPQYILDMLDEKGIAWSLHSSIEEVMAEVDILYMTRVQKERLDPSEYANVKAQFVLRASDLHNAKANMKVLHPLPRVDEIATDVDKTPHAWYFQQAGNGIFARQALLALVLNRDLVL</sequence>
<gene>
    <name evidence="1" type="primary">pyrB</name>
    <name type="ordered locus">ECP_4495</name>
</gene>
<accession>Q0T9E3</accession>
<feature type="chain" id="PRO_0000301574" description="Aspartate carbamoyltransferase catalytic subunit">
    <location>
        <begin position="1"/>
        <end position="311"/>
    </location>
</feature>
<feature type="binding site" evidence="1">
    <location>
        <position position="55"/>
    </location>
    <ligand>
        <name>carbamoyl phosphate</name>
        <dbReference type="ChEBI" id="CHEBI:58228"/>
    </ligand>
</feature>
<feature type="binding site" evidence="1">
    <location>
        <position position="56"/>
    </location>
    <ligand>
        <name>carbamoyl phosphate</name>
        <dbReference type="ChEBI" id="CHEBI:58228"/>
    </ligand>
</feature>
<feature type="binding site" evidence="1">
    <location>
        <position position="85"/>
    </location>
    <ligand>
        <name>L-aspartate</name>
        <dbReference type="ChEBI" id="CHEBI:29991"/>
    </ligand>
</feature>
<feature type="binding site" evidence="1">
    <location>
        <position position="106"/>
    </location>
    <ligand>
        <name>carbamoyl phosphate</name>
        <dbReference type="ChEBI" id="CHEBI:58228"/>
    </ligand>
</feature>
<feature type="binding site" evidence="1">
    <location>
        <position position="135"/>
    </location>
    <ligand>
        <name>carbamoyl phosphate</name>
        <dbReference type="ChEBI" id="CHEBI:58228"/>
    </ligand>
</feature>
<feature type="binding site" evidence="1">
    <location>
        <position position="138"/>
    </location>
    <ligand>
        <name>carbamoyl phosphate</name>
        <dbReference type="ChEBI" id="CHEBI:58228"/>
    </ligand>
</feature>
<feature type="binding site" evidence="1">
    <location>
        <position position="168"/>
    </location>
    <ligand>
        <name>L-aspartate</name>
        <dbReference type="ChEBI" id="CHEBI:29991"/>
    </ligand>
</feature>
<feature type="binding site" evidence="1">
    <location>
        <position position="230"/>
    </location>
    <ligand>
        <name>L-aspartate</name>
        <dbReference type="ChEBI" id="CHEBI:29991"/>
    </ligand>
</feature>
<feature type="binding site" evidence="1">
    <location>
        <position position="268"/>
    </location>
    <ligand>
        <name>carbamoyl phosphate</name>
        <dbReference type="ChEBI" id="CHEBI:58228"/>
    </ligand>
</feature>
<feature type="binding site" evidence="1">
    <location>
        <position position="269"/>
    </location>
    <ligand>
        <name>carbamoyl phosphate</name>
        <dbReference type="ChEBI" id="CHEBI:58228"/>
    </ligand>
</feature>
<evidence type="ECO:0000255" key="1">
    <source>
        <dbReference type="HAMAP-Rule" id="MF_00001"/>
    </source>
</evidence>